<name>IPYR_PYRFU</name>
<accession>Q8U438</accession>
<protein>
    <recommendedName>
        <fullName evidence="1">Inorganic pyrophosphatase</fullName>
        <ecNumber evidence="1">3.6.1.1</ecNumber>
    </recommendedName>
    <alternativeName>
        <fullName evidence="1">Pyrophosphate phospho-hydrolase</fullName>
        <shortName evidence="1">PPase</shortName>
    </alternativeName>
</protein>
<organism>
    <name type="scientific">Pyrococcus furiosus (strain ATCC 43587 / DSM 3638 / JCM 8422 / Vc1)</name>
    <dbReference type="NCBI Taxonomy" id="186497"/>
    <lineage>
        <taxon>Archaea</taxon>
        <taxon>Methanobacteriati</taxon>
        <taxon>Methanobacteriota</taxon>
        <taxon>Thermococci</taxon>
        <taxon>Thermococcales</taxon>
        <taxon>Thermococcaceae</taxon>
        <taxon>Pyrococcus</taxon>
    </lineage>
</organism>
<comment type="function">
    <text evidence="1">Catalyzes the hydrolysis of inorganic pyrophosphate (PPi) forming two phosphate ions.</text>
</comment>
<comment type="catalytic activity">
    <reaction evidence="1">
        <text>diphosphate + H2O = 2 phosphate + H(+)</text>
        <dbReference type="Rhea" id="RHEA:24576"/>
        <dbReference type="ChEBI" id="CHEBI:15377"/>
        <dbReference type="ChEBI" id="CHEBI:15378"/>
        <dbReference type="ChEBI" id="CHEBI:33019"/>
        <dbReference type="ChEBI" id="CHEBI:43474"/>
        <dbReference type="EC" id="3.6.1.1"/>
    </reaction>
</comment>
<comment type="cofactor">
    <cofactor evidence="1">
        <name>Mg(2+)</name>
        <dbReference type="ChEBI" id="CHEBI:18420"/>
    </cofactor>
</comment>
<comment type="subunit">
    <text evidence="1">Homohexamer.</text>
</comment>
<comment type="subcellular location">
    <subcellularLocation>
        <location evidence="1">Cytoplasm</location>
    </subcellularLocation>
</comment>
<comment type="similarity">
    <text evidence="1">Belongs to the PPase family.</text>
</comment>
<proteinExistence type="evidence at protein level"/>
<feature type="chain" id="PRO_0000137556" description="Inorganic pyrophosphatase">
    <location>
        <begin position="1"/>
        <end position="178"/>
    </location>
</feature>
<feature type="binding site" evidence="1">
    <location>
        <position position="30"/>
    </location>
    <ligand>
        <name>substrate</name>
    </ligand>
</feature>
<feature type="binding site" evidence="1">
    <location>
        <position position="44"/>
    </location>
    <ligand>
        <name>substrate</name>
    </ligand>
</feature>
<feature type="binding site" evidence="1">
    <location>
        <position position="56"/>
    </location>
    <ligand>
        <name>substrate</name>
    </ligand>
</feature>
<feature type="binding site" evidence="1">
    <location>
        <position position="66"/>
    </location>
    <ligand>
        <name>Mg(2+)</name>
        <dbReference type="ChEBI" id="CHEBI:18420"/>
        <label>1</label>
    </ligand>
</feature>
<feature type="binding site" evidence="1">
    <location>
        <position position="71"/>
    </location>
    <ligand>
        <name>Mg(2+)</name>
        <dbReference type="ChEBI" id="CHEBI:18420"/>
        <label>1</label>
    </ligand>
</feature>
<feature type="binding site" evidence="1">
    <location>
        <position position="71"/>
    </location>
    <ligand>
        <name>Mg(2+)</name>
        <dbReference type="ChEBI" id="CHEBI:18420"/>
        <label>2</label>
    </ligand>
</feature>
<feature type="binding site" evidence="1">
    <location>
        <position position="103"/>
    </location>
    <ligand>
        <name>Mg(2+)</name>
        <dbReference type="ChEBI" id="CHEBI:18420"/>
        <label>1</label>
    </ligand>
</feature>
<feature type="binding site" evidence="1">
    <location>
        <position position="140"/>
    </location>
    <ligand>
        <name>substrate</name>
    </ligand>
</feature>
<feature type="helix" evidence="2">
    <location>
        <begin position="3"/>
        <end position="6"/>
    </location>
</feature>
<feature type="turn" evidence="2">
    <location>
        <begin position="13"/>
        <end position="15"/>
    </location>
</feature>
<feature type="strand" evidence="2">
    <location>
        <begin position="16"/>
        <end position="23"/>
    </location>
</feature>
<feature type="strand" evidence="2">
    <location>
        <begin position="28"/>
        <end position="33"/>
    </location>
</feature>
<feature type="turn" evidence="2">
    <location>
        <begin position="35"/>
        <end position="37"/>
    </location>
</feature>
<feature type="strand" evidence="2">
    <location>
        <begin position="40"/>
        <end position="45"/>
    </location>
</feature>
<feature type="strand" evidence="2">
    <location>
        <begin position="47"/>
        <end position="49"/>
    </location>
</feature>
<feature type="strand" evidence="2">
    <location>
        <begin position="53"/>
        <end position="58"/>
    </location>
</feature>
<feature type="strand" evidence="2">
    <location>
        <begin position="71"/>
        <end position="74"/>
    </location>
</feature>
<feature type="strand" evidence="2">
    <location>
        <begin position="85"/>
        <end position="98"/>
    </location>
</feature>
<feature type="strand" evidence="2">
    <location>
        <begin position="105"/>
        <end position="110"/>
    </location>
</feature>
<feature type="helix" evidence="2">
    <location>
        <begin position="114"/>
        <end position="116"/>
    </location>
</feature>
<feature type="helix" evidence="2">
    <location>
        <begin position="122"/>
        <end position="124"/>
    </location>
</feature>
<feature type="helix" evidence="2">
    <location>
        <begin position="127"/>
        <end position="139"/>
    </location>
</feature>
<feature type="helix" evidence="2">
    <location>
        <begin position="142"/>
        <end position="144"/>
    </location>
</feature>
<feature type="strand" evidence="2">
    <location>
        <begin position="148"/>
        <end position="155"/>
    </location>
</feature>
<feature type="helix" evidence="2">
    <location>
        <begin position="156"/>
        <end position="172"/>
    </location>
</feature>
<keyword id="KW-0002">3D-structure</keyword>
<keyword id="KW-0963">Cytoplasm</keyword>
<keyword id="KW-0378">Hydrolase</keyword>
<keyword id="KW-0460">Magnesium</keyword>
<keyword id="KW-0479">Metal-binding</keyword>
<keyword id="KW-1185">Reference proteome</keyword>
<dbReference type="EC" id="3.6.1.1" evidence="1"/>
<dbReference type="EMBL" id="AE009950">
    <property type="protein sequence ID" value="AAL80381.1"/>
    <property type="molecule type" value="Genomic_DNA"/>
</dbReference>
<dbReference type="RefSeq" id="WP_011011372.1">
    <property type="nucleotide sequence ID" value="NZ_CP023154.1"/>
</dbReference>
<dbReference type="PDB" id="1TWL">
    <property type="method" value="X-ray"/>
    <property type="resolution" value="2.20 A"/>
    <property type="chains" value="A=2-178"/>
</dbReference>
<dbReference type="PDBsum" id="1TWL"/>
<dbReference type="SMR" id="Q8U438"/>
<dbReference type="STRING" id="186497.PF0257"/>
<dbReference type="PaxDb" id="186497-PF0257"/>
<dbReference type="KEGG" id="pfu:PF0257"/>
<dbReference type="PATRIC" id="fig|186497.12.peg.269"/>
<dbReference type="eggNOG" id="arCOG01711">
    <property type="taxonomic scope" value="Archaea"/>
</dbReference>
<dbReference type="HOGENOM" id="CLU_073198_1_2_2"/>
<dbReference type="OrthoDB" id="134160at2157"/>
<dbReference type="PhylomeDB" id="Q8U438"/>
<dbReference type="BRENDA" id="3.6.1.1">
    <property type="organism ID" value="5243"/>
</dbReference>
<dbReference type="EvolutionaryTrace" id="Q8U438"/>
<dbReference type="Proteomes" id="UP000001013">
    <property type="component" value="Chromosome"/>
</dbReference>
<dbReference type="GO" id="GO:0005737">
    <property type="term" value="C:cytoplasm"/>
    <property type="evidence" value="ECO:0007669"/>
    <property type="project" value="UniProtKB-SubCell"/>
</dbReference>
<dbReference type="GO" id="GO:0004427">
    <property type="term" value="F:inorganic diphosphate phosphatase activity"/>
    <property type="evidence" value="ECO:0007669"/>
    <property type="project" value="UniProtKB-UniRule"/>
</dbReference>
<dbReference type="GO" id="GO:0000287">
    <property type="term" value="F:magnesium ion binding"/>
    <property type="evidence" value="ECO:0007669"/>
    <property type="project" value="UniProtKB-UniRule"/>
</dbReference>
<dbReference type="GO" id="GO:0006796">
    <property type="term" value="P:phosphate-containing compound metabolic process"/>
    <property type="evidence" value="ECO:0007669"/>
    <property type="project" value="InterPro"/>
</dbReference>
<dbReference type="CDD" id="cd00412">
    <property type="entry name" value="pyrophosphatase"/>
    <property type="match status" value="1"/>
</dbReference>
<dbReference type="FunFam" id="3.90.80.10:FF:000003">
    <property type="entry name" value="Inorganic pyrophosphatase"/>
    <property type="match status" value="1"/>
</dbReference>
<dbReference type="Gene3D" id="3.90.80.10">
    <property type="entry name" value="Inorganic pyrophosphatase"/>
    <property type="match status" value="1"/>
</dbReference>
<dbReference type="HAMAP" id="MF_00209">
    <property type="entry name" value="Inorganic_PPase"/>
    <property type="match status" value="1"/>
</dbReference>
<dbReference type="InterPro" id="IPR008162">
    <property type="entry name" value="Pyrophosphatase"/>
</dbReference>
<dbReference type="InterPro" id="IPR036649">
    <property type="entry name" value="Pyrophosphatase_sf"/>
</dbReference>
<dbReference type="PANTHER" id="PTHR10286">
    <property type="entry name" value="INORGANIC PYROPHOSPHATASE"/>
    <property type="match status" value="1"/>
</dbReference>
<dbReference type="Pfam" id="PF00719">
    <property type="entry name" value="Pyrophosphatase"/>
    <property type="match status" value="1"/>
</dbReference>
<dbReference type="SUPFAM" id="SSF50324">
    <property type="entry name" value="Inorganic pyrophosphatase"/>
    <property type="match status" value="1"/>
</dbReference>
<dbReference type="PROSITE" id="PS00387">
    <property type="entry name" value="PPASE"/>
    <property type="match status" value="1"/>
</dbReference>
<gene>
    <name evidence="1" type="primary">ppa</name>
    <name type="ordered locus">PF0257</name>
</gene>
<sequence>MNPFHDLEPGPDVPEVVYAIIEIPKGSRNKYELDKKTGLLKLDRVLYSPFFYPVDYGIIPRTWYEDDDPFDIMVIMREPVYPLTIIEARPIGLFKMIDSGDKDYKVLAVPVEDPYFKDWKDIDDVPKAFLDEIAHFFKRYKELQGKEIIVEGWEGAEAAKREILRAIEMYKEKFGKKE</sequence>
<reference key="1">
    <citation type="journal article" date="1999" name="Genetics">
        <title>Divergence of the hyperthermophilic archaea Pyrococcus furiosus and P. horikoshii inferred from complete genomic sequences.</title>
        <authorList>
            <person name="Maeder D.L."/>
            <person name="Weiss R.B."/>
            <person name="Dunn D.M."/>
            <person name="Cherry J.L."/>
            <person name="Gonzalez J.M."/>
            <person name="DiRuggiero J."/>
            <person name="Robb F.T."/>
        </authorList>
    </citation>
    <scope>NUCLEOTIDE SEQUENCE [LARGE SCALE GENOMIC DNA]</scope>
    <source>
        <strain>ATCC 43587 / DSM 3638 / JCM 8422 / Vc1</strain>
    </source>
</reference>
<evidence type="ECO:0000255" key="1">
    <source>
        <dbReference type="HAMAP-Rule" id="MF_00209"/>
    </source>
</evidence>
<evidence type="ECO:0007829" key="2">
    <source>
        <dbReference type="PDB" id="1TWL"/>
    </source>
</evidence>